<reference key="1">
    <citation type="journal article" date="2007" name="Proc. Natl. Acad. Sci. U.S.A.">
        <title>Genome sequencing and comparative analysis of Saccharomyces cerevisiae strain YJM789.</title>
        <authorList>
            <person name="Wei W."/>
            <person name="McCusker J.H."/>
            <person name="Hyman R.W."/>
            <person name="Jones T."/>
            <person name="Ning Y."/>
            <person name="Cao Z."/>
            <person name="Gu Z."/>
            <person name="Bruno D."/>
            <person name="Miranda M."/>
            <person name="Nguyen M."/>
            <person name="Wilhelmy J."/>
            <person name="Komp C."/>
            <person name="Tamse R."/>
            <person name="Wang X."/>
            <person name="Jia P."/>
            <person name="Luedi P."/>
            <person name="Oefner P.J."/>
            <person name="David L."/>
            <person name="Dietrich F.S."/>
            <person name="Li Y."/>
            <person name="Davis R.W."/>
            <person name="Steinmetz L.M."/>
        </authorList>
    </citation>
    <scope>NUCLEOTIDE SEQUENCE [LARGE SCALE GENOMIC DNA]</scope>
    <source>
        <strain>YJM789</strain>
    </source>
</reference>
<protein>
    <recommendedName>
        <fullName>Ubiquitin-like-conjugating enzyme ATG10</fullName>
        <ecNumber>2.3.2.-</ecNumber>
    </recommendedName>
    <alternativeName>
        <fullName>Autophagy-related protein 10</fullName>
    </alternativeName>
</protein>
<dbReference type="EC" id="2.3.2.-"/>
<dbReference type="EMBL" id="AAFW02000167">
    <property type="protein sequence ID" value="EDN59507.1"/>
    <property type="molecule type" value="Genomic_DNA"/>
</dbReference>
<dbReference type="SMR" id="A7A0L6"/>
<dbReference type="HOGENOM" id="CLU_114192_0_0_1"/>
<dbReference type="Proteomes" id="UP000007060">
    <property type="component" value="Unassembled WGS sequence"/>
</dbReference>
<dbReference type="GO" id="GO:0034045">
    <property type="term" value="C:phagophore assembly site membrane"/>
    <property type="evidence" value="ECO:0007669"/>
    <property type="project" value="UniProtKB-SubCell"/>
</dbReference>
<dbReference type="GO" id="GO:0019777">
    <property type="term" value="F:Atg12 transferase activity"/>
    <property type="evidence" value="ECO:0007669"/>
    <property type="project" value="InterPro"/>
</dbReference>
<dbReference type="GO" id="GO:0006914">
    <property type="term" value="P:autophagy"/>
    <property type="evidence" value="ECO:0007669"/>
    <property type="project" value="UniProtKB-KW"/>
</dbReference>
<dbReference type="GO" id="GO:0015031">
    <property type="term" value="P:protein transport"/>
    <property type="evidence" value="ECO:0007669"/>
    <property type="project" value="UniProtKB-KW"/>
</dbReference>
<dbReference type="Gene3D" id="3.30.1460.50">
    <property type="match status" value="1"/>
</dbReference>
<dbReference type="InterPro" id="IPR016524">
    <property type="entry name" value="Atg10"/>
</dbReference>
<dbReference type="InterPro" id="IPR007135">
    <property type="entry name" value="Atg3/Atg10"/>
</dbReference>
<dbReference type="Pfam" id="PF03987">
    <property type="entry name" value="Autophagy_act_C"/>
    <property type="match status" value="1"/>
</dbReference>
<dbReference type="PIRSF" id="PIRSF007802">
    <property type="entry name" value="Autophagy-rel_ATG10"/>
    <property type="match status" value="1"/>
</dbReference>
<name>ATG10_YEAS7</name>
<accession>A7A0L6</accession>
<comment type="function">
    <text evidence="1">E2-like enzyme required for the cytoplasm to vacuole transport (Cvt), autophagy and nucleophagy. Acts as an E2-like enzyme that catalyzes the conjugation of ATG12 to ATG5. ATG12 conjugation to ATG5 is required for proper localization of ATG8 to the preautophagosomal structure (PAS). Likely serves as an ATG5-recognition molecule (By similarity).</text>
</comment>
<comment type="subunit">
    <text evidence="1">Forms homooligomers. Interacts with ATG7 and ATG12.</text>
</comment>
<comment type="subcellular location">
    <subcellularLocation>
        <location evidence="1">Preautophagosomal structure membrane</location>
        <topology evidence="1">Peripheral membrane protein</topology>
    </subcellularLocation>
</comment>
<comment type="similarity">
    <text evidence="2">Belongs to the ATG10 family.</text>
</comment>
<evidence type="ECO:0000250" key="1"/>
<evidence type="ECO:0000305" key="2"/>
<feature type="chain" id="PRO_0000317923" description="Ubiquitin-like-conjugating enzyme ATG10">
    <location>
        <begin position="1"/>
        <end position="167"/>
    </location>
</feature>
<feature type="active site" description="Glycyl thioester intermediate" evidence="1">
    <location>
        <position position="133"/>
    </location>
</feature>
<proteinExistence type="inferred from homology"/>
<sequence>MIPYQEWHSQLQLLYDSQIFHNWALCQDVHLNDEKDGLLLRLIPTRQLQKNTERIENKLLSHIELYLTYSKVYNEPLLLLRIWEEKSIDGIPMTKLMLPTDIESLLDVQGKFQLGLDTIINLEGSVWYSFHPCDTSCIVGDQAEFMSTYLRRWVSIFIFSWLGYEDS</sequence>
<gene>
    <name type="primary">ATG10</name>
    <name type="ORF">SCY_3540</name>
</gene>
<organism>
    <name type="scientific">Saccharomyces cerevisiae (strain YJM789)</name>
    <name type="common">Baker's yeast</name>
    <dbReference type="NCBI Taxonomy" id="307796"/>
    <lineage>
        <taxon>Eukaryota</taxon>
        <taxon>Fungi</taxon>
        <taxon>Dikarya</taxon>
        <taxon>Ascomycota</taxon>
        <taxon>Saccharomycotina</taxon>
        <taxon>Saccharomycetes</taxon>
        <taxon>Saccharomycetales</taxon>
        <taxon>Saccharomycetaceae</taxon>
        <taxon>Saccharomyces</taxon>
    </lineage>
</organism>
<keyword id="KW-0072">Autophagy</keyword>
<keyword id="KW-0472">Membrane</keyword>
<keyword id="KW-0653">Protein transport</keyword>
<keyword id="KW-0808">Transferase</keyword>
<keyword id="KW-0813">Transport</keyword>
<keyword id="KW-0833">Ubl conjugation pathway</keyword>